<keyword id="KW-0413">Isomerase</keyword>
<keyword id="KW-0819">tRNA processing</keyword>
<accession>Q31YE0</accession>
<feature type="chain" id="PRO_1000017175" description="tRNA pseudouridine synthase A">
    <location>
        <begin position="1"/>
        <end position="270"/>
    </location>
</feature>
<feature type="region of interest" description="RNA binding" evidence="1">
    <location>
        <begin position="107"/>
        <end position="111"/>
    </location>
</feature>
<feature type="region of interest" description="Interaction with tRNA" evidence="1">
    <location>
        <begin position="168"/>
        <end position="172"/>
    </location>
</feature>
<feature type="active site" description="Nucleophile" evidence="1">
    <location>
        <position position="60"/>
    </location>
</feature>
<feature type="binding site" evidence="1">
    <location>
        <position position="118"/>
    </location>
    <ligand>
        <name>substrate</name>
    </ligand>
</feature>
<feature type="site" description="Interaction with tRNA; Important for base-flipping" evidence="1">
    <location>
        <position position="58"/>
    </location>
</feature>
<feature type="site" description="Interaction with tRNA" evidence="1">
    <location>
        <position position="78"/>
    </location>
</feature>
<feature type="site" description="Interaction with tRNA" evidence="1">
    <location>
        <position position="110"/>
    </location>
</feature>
<feature type="site" description="Interaction with tRNA" evidence="1">
    <location>
        <position position="126"/>
    </location>
</feature>
<feature type="site" description="Interaction with tRNA" evidence="1">
    <location>
        <position position="139"/>
    </location>
</feature>
<dbReference type="EC" id="5.4.99.12" evidence="1"/>
<dbReference type="EMBL" id="CP000036">
    <property type="protein sequence ID" value="ABB66918.1"/>
    <property type="molecule type" value="Genomic_DNA"/>
</dbReference>
<dbReference type="RefSeq" id="WP_001283574.1">
    <property type="nucleotide sequence ID" value="NC_007613.1"/>
</dbReference>
<dbReference type="SMR" id="Q31YE0"/>
<dbReference type="KEGG" id="sbo:SBO_2355"/>
<dbReference type="HOGENOM" id="CLU_014673_0_2_6"/>
<dbReference type="Proteomes" id="UP000007067">
    <property type="component" value="Chromosome"/>
</dbReference>
<dbReference type="GO" id="GO:0003723">
    <property type="term" value="F:RNA binding"/>
    <property type="evidence" value="ECO:0007669"/>
    <property type="project" value="InterPro"/>
</dbReference>
<dbReference type="GO" id="GO:0160147">
    <property type="term" value="F:tRNA pseudouridine(38-40) synthase activity"/>
    <property type="evidence" value="ECO:0007669"/>
    <property type="project" value="UniProtKB-EC"/>
</dbReference>
<dbReference type="GO" id="GO:0031119">
    <property type="term" value="P:tRNA pseudouridine synthesis"/>
    <property type="evidence" value="ECO:0007669"/>
    <property type="project" value="UniProtKB-UniRule"/>
</dbReference>
<dbReference type="CDD" id="cd02570">
    <property type="entry name" value="PseudoU_synth_EcTruA"/>
    <property type="match status" value="1"/>
</dbReference>
<dbReference type="FunFam" id="3.30.70.580:FF:000001">
    <property type="entry name" value="tRNA pseudouridine synthase A"/>
    <property type="match status" value="1"/>
</dbReference>
<dbReference type="FunFam" id="3.30.70.660:FF:000001">
    <property type="entry name" value="tRNA pseudouridine synthase A"/>
    <property type="match status" value="1"/>
</dbReference>
<dbReference type="Gene3D" id="3.30.70.660">
    <property type="entry name" value="Pseudouridine synthase I, catalytic domain, C-terminal subdomain"/>
    <property type="match status" value="1"/>
</dbReference>
<dbReference type="Gene3D" id="3.30.70.580">
    <property type="entry name" value="Pseudouridine synthase I, catalytic domain, N-terminal subdomain"/>
    <property type="match status" value="1"/>
</dbReference>
<dbReference type="HAMAP" id="MF_00171">
    <property type="entry name" value="TruA"/>
    <property type="match status" value="1"/>
</dbReference>
<dbReference type="InterPro" id="IPR020103">
    <property type="entry name" value="PsdUridine_synth_cat_dom_sf"/>
</dbReference>
<dbReference type="InterPro" id="IPR001406">
    <property type="entry name" value="PsdUridine_synth_TruA"/>
</dbReference>
<dbReference type="InterPro" id="IPR020097">
    <property type="entry name" value="PsdUridine_synth_TruA_a/b_dom"/>
</dbReference>
<dbReference type="InterPro" id="IPR020095">
    <property type="entry name" value="PsdUridine_synth_TruA_C"/>
</dbReference>
<dbReference type="InterPro" id="IPR020094">
    <property type="entry name" value="TruA/RsuA/RluB/E/F_N"/>
</dbReference>
<dbReference type="NCBIfam" id="TIGR00071">
    <property type="entry name" value="hisT_truA"/>
    <property type="match status" value="1"/>
</dbReference>
<dbReference type="PANTHER" id="PTHR11142">
    <property type="entry name" value="PSEUDOURIDYLATE SYNTHASE"/>
    <property type="match status" value="1"/>
</dbReference>
<dbReference type="PANTHER" id="PTHR11142:SF0">
    <property type="entry name" value="TRNA PSEUDOURIDINE SYNTHASE-LIKE 1"/>
    <property type="match status" value="1"/>
</dbReference>
<dbReference type="Pfam" id="PF01416">
    <property type="entry name" value="PseudoU_synth_1"/>
    <property type="match status" value="2"/>
</dbReference>
<dbReference type="PIRSF" id="PIRSF001430">
    <property type="entry name" value="tRNA_psdUrid_synth"/>
    <property type="match status" value="1"/>
</dbReference>
<dbReference type="SUPFAM" id="SSF55120">
    <property type="entry name" value="Pseudouridine synthase"/>
    <property type="match status" value="1"/>
</dbReference>
<evidence type="ECO:0000255" key="1">
    <source>
        <dbReference type="HAMAP-Rule" id="MF_00171"/>
    </source>
</evidence>
<name>TRUA_SHIBS</name>
<protein>
    <recommendedName>
        <fullName evidence="1">tRNA pseudouridine synthase A</fullName>
        <ecNumber evidence="1">5.4.99.12</ecNumber>
    </recommendedName>
    <alternativeName>
        <fullName evidence="1">tRNA pseudouridine(38-40) synthase</fullName>
    </alternativeName>
    <alternativeName>
        <fullName evidence="1">tRNA pseudouridylate synthase I</fullName>
    </alternativeName>
    <alternativeName>
        <fullName evidence="1">tRNA-uridine isomerase I</fullName>
    </alternativeName>
</protein>
<sequence length="270" mass="30428">MSDQQQLPVYKIALGIEYDGSKYYGWQRQNEVRSVQEKLEKALSQVANEPITVFCAGRTDAGVHGTGQVVHFETTAPRKDAAWTLGVNANLPDDIAVRWVKAVPDDFHARFSATARRYRYIIYNHRLRPAVLSKGVTHFYEPLDAERMHRAAQCLLGENDFTSFRAVQCQSRTPWRNVMHINVTRHGPYVVVDIKANAFVHHMVRNIVGSLMEVGAHNQPESWIAELLAAKDRTLAAATAKAEGLYLVAVDYPDRYDLPKPPMGPLFLAD</sequence>
<reference key="1">
    <citation type="journal article" date="2005" name="Nucleic Acids Res.">
        <title>Genome dynamics and diversity of Shigella species, the etiologic agents of bacillary dysentery.</title>
        <authorList>
            <person name="Yang F."/>
            <person name="Yang J."/>
            <person name="Zhang X."/>
            <person name="Chen L."/>
            <person name="Jiang Y."/>
            <person name="Yan Y."/>
            <person name="Tang X."/>
            <person name="Wang J."/>
            <person name="Xiong Z."/>
            <person name="Dong J."/>
            <person name="Xue Y."/>
            <person name="Zhu Y."/>
            <person name="Xu X."/>
            <person name="Sun L."/>
            <person name="Chen S."/>
            <person name="Nie H."/>
            <person name="Peng J."/>
            <person name="Xu J."/>
            <person name="Wang Y."/>
            <person name="Yuan Z."/>
            <person name="Wen Y."/>
            <person name="Yao Z."/>
            <person name="Shen Y."/>
            <person name="Qiang B."/>
            <person name="Hou Y."/>
            <person name="Yu J."/>
            <person name="Jin Q."/>
        </authorList>
    </citation>
    <scope>NUCLEOTIDE SEQUENCE [LARGE SCALE GENOMIC DNA]</scope>
    <source>
        <strain>Sb227</strain>
    </source>
</reference>
<proteinExistence type="inferred from homology"/>
<gene>
    <name evidence="1" type="primary">truA</name>
    <name type="ordered locus">SBO_2355</name>
</gene>
<comment type="function">
    <text evidence="1">Formation of pseudouridine at positions 38, 39 and 40 in the anticodon stem and loop of transfer RNAs.</text>
</comment>
<comment type="catalytic activity">
    <reaction evidence="1">
        <text>uridine(38/39/40) in tRNA = pseudouridine(38/39/40) in tRNA</text>
        <dbReference type="Rhea" id="RHEA:22376"/>
        <dbReference type="Rhea" id="RHEA-COMP:10085"/>
        <dbReference type="Rhea" id="RHEA-COMP:10087"/>
        <dbReference type="ChEBI" id="CHEBI:65314"/>
        <dbReference type="ChEBI" id="CHEBI:65315"/>
        <dbReference type="EC" id="5.4.99.12"/>
    </reaction>
</comment>
<comment type="subunit">
    <text evidence="1">Homodimer.</text>
</comment>
<comment type="similarity">
    <text evidence="1">Belongs to the tRNA pseudouridine synthase TruA family.</text>
</comment>
<organism>
    <name type="scientific">Shigella boydii serotype 4 (strain Sb227)</name>
    <dbReference type="NCBI Taxonomy" id="300268"/>
    <lineage>
        <taxon>Bacteria</taxon>
        <taxon>Pseudomonadati</taxon>
        <taxon>Pseudomonadota</taxon>
        <taxon>Gammaproteobacteria</taxon>
        <taxon>Enterobacterales</taxon>
        <taxon>Enterobacteriaceae</taxon>
        <taxon>Shigella</taxon>
    </lineage>
</organism>